<keyword id="KW-0963">Cytoplasm</keyword>
<keyword id="KW-0227">DNA damage</keyword>
<keyword id="KW-0233">DNA recombination</keyword>
<keyword id="KW-0234">DNA repair</keyword>
<keyword id="KW-0238">DNA-binding</keyword>
<keyword id="KW-0255">Endonuclease</keyword>
<keyword id="KW-0378">Hydrolase</keyword>
<keyword id="KW-0460">Magnesium</keyword>
<keyword id="KW-0479">Metal-binding</keyword>
<keyword id="KW-0540">Nuclease</keyword>
<reference key="1">
    <citation type="submission" date="2007-05" db="EMBL/GenBank/DDBJ databases">
        <title>Complete sequence of Pseudomonas putida F1.</title>
        <authorList>
            <consortium name="US DOE Joint Genome Institute"/>
            <person name="Copeland A."/>
            <person name="Lucas S."/>
            <person name="Lapidus A."/>
            <person name="Barry K."/>
            <person name="Detter J.C."/>
            <person name="Glavina del Rio T."/>
            <person name="Hammon N."/>
            <person name="Israni S."/>
            <person name="Dalin E."/>
            <person name="Tice H."/>
            <person name="Pitluck S."/>
            <person name="Chain P."/>
            <person name="Malfatti S."/>
            <person name="Shin M."/>
            <person name="Vergez L."/>
            <person name="Schmutz J."/>
            <person name="Larimer F."/>
            <person name="Land M."/>
            <person name="Hauser L."/>
            <person name="Kyrpides N."/>
            <person name="Lykidis A."/>
            <person name="Parales R."/>
            <person name="Richardson P."/>
        </authorList>
    </citation>
    <scope>NUCLEOTIDE SEQUENCE [LARGE SCALE GENOMIC DNA]</scope>
    <source>
        <strain>ATCC 700007 / DSM 6899 / JCM 31910 / BCRC 17059 / LMG 24140 / F1</strain>
    </source>
</reference>
<sequence>MTLILGIDPGSRITGYGVVRQTARGCEYVASGCIRTGSGELHERLQIVFRGVSEIIAQHGPVTMGIERVFMARNADSALKLGQARGAAIVAAAEAGLEIAEYSATQVKQAVAGTGGANKEQVMMMVMHLLKLTQKPQIDASDALAIALCHAHTRSSLVPHGLSTARRRGGRLRL</sequence>
<protein>
    <recommendedName>
        <fullName evidence="1">Crossover junction endodeoxyribonuclease RuvC</fullName>
        <ecNumber evidence="1">3.1.21.10</ecNumber>
    </recommendedName>
    <alternativeName>
        <fullName evidence="1">Holliday junction nuclease RuvC</fullName>
    </alternativeName>
    <alternativeName>
        <fullName evidence="1">Holliday junction resolvase RuvC</fullName>
    </alternativeName>
</protein>
<evidence type="ECO:0000255" key="1">
    <source>
        <dbReference type="HAMAP-Rule" id="MF_00034"/>
    </source>
</evidence>
<proteinExistence type="inferred from homology"/>
<gene>
    <name evidence="1" type="primary">ruvC</name>
    <name type="ordered locus">Pput_1244</name>
</gene>
<comment type="function">
    <text evidence="1">The RuvA-RuvB-RuvC complex processes Holliday junction (HJ) DNA during genetic recombination and DNA repair. Endonuclease that resolves HJ intermediates. Cleaves cruciform DNA by making single-stranded nicks across the HJ at symmetrical positions within the homologous arms, yielding a 5'-phosphate and a 3'-hydroxyl group; requires a central core of homology in the junction. The consensus cleavage sequence is 5'-(A/T)TT(C/G)-3'. Cleavage occurs on the 3'-side of the TT dinucleotide at the point of strand exchange. HJ branch migration catalyzed by RuvA-RuvB allows RuvC to scan DNA until it finds its consensus sequence, where it cleaves and resolves the cruciform DNA.</text>
</comment>
<comment type="catalytic activity">
    <reaction evidence="1">
        <text>Endonucleolytic cleavage at a junction such as a reciprocal single-stranded crossover between two homologous DNA duplexes (Holliday junction).</text>
        <dbReference type="EC" id="3.1.21.10"/>
    </reaction>
</comment>
<comment type="cofactor">
    <cofactor evidence="1">
        <name>Mg(2+)</name>
        <dbReference type="ChEBI" id="CHEBI:18420"/>
    </cofactor>
    <text evidence="1">Binds 2 Mg(2+) ion per subunit.</text>
</comment>
<comment type="subunit">
    <text evidence="1">Homodimer which binds Holliday junction (HJ) DNA. The HJ becomes 2-fold symmetrical on binding to RuvC with unstacked arms; it has a different conformation from HJ DNA in complex with RuvA. In the full resolvosome a probable DNA-RuvA(4)-RuvB(12)-RuvC(2) complex forms which resolves the HJ.</text>
</comment>
<comment type="subcellular location">
    <subcellularLocation>
        <location evidence="1">Cytoplasm</location>
    </subcellularLocation>
</comment>
<comment type="similarity">
    <text evidence="1">Belongs to the RuvC family.</text>
</comment>
<accession>A5VZU5</accession>
<organism>
    <name type="scientific">Pseudomonas putida (strain ATCC 700007 / DSM 6899 / JCM 31910 / BCRC 17059 / LMG 24140 / F1)</name>
    <dbReference type="NCBI Taxonomy" id="351746"/>
    <lineage>
        <taxon>Bacteria</taxon>
        <taxon>Pseudomonadati</taxon>
        <taxon>Pseudomonadota</taxon>
        <taxon>Gammaproteobacteria</taxon>
        <taxon>Pseudomonadales</taxon>
        <taxon>Pseudomonadaceae</taxon>
        <taxon>Pseudomonas</taxon>
    </lineage>
</organism>
<dbReference type="EC" id="3.1.21.10" evidence="1"/>
<dbReference type="EMBL" id="CP000712">
    <property type="protein sequence ID" value="ABQ77405.1"/>
    <property type="molecule type" value="Genomic_DNA"/>
</dbReference>
<dbReference type="SMR" id="A5VZU5"/>
<dbReference type="KEGG" id="ppf:Pput_1244"/>
<dbReference type="eggNOG" id="COG0817">
    <property type="taxonomic scope" value="Bacteria"/>
</dbReference>
<dbReference type="HOGENOM" id="CLU_091257_2_1_6"/>
<dbReference type="GO" id="GO:0005737">
    <property type="term" value="C:cytoplasm"/>
    <property type="evidence" value="ECO:0007669"/>
    <property type="project" value="UniProtKB-SubCell"/>
</dbReference>
<dbReference type="GO" id="GO:0048476">
    <property type="term" value="C:Holliday junction resolvase complex"/>
    <property type="evidence" value="ECO:0007669"/>
    <property type="project" value="UniProtKB-UniRule"/>
</dbReference>
<dbReference type="GO" id="GO:0008821">
    <property type="term" value="F:crossover junction DNA endonuclease activity"/>
    <property type="evidence" value="ECO:0007669"/>
    <property type="project" value="UniProtKB-UniRule"/>
</dbReference>
<dbReference type="GO" id="GO:0003677">
    <property type="term" value="F:DNA binding"/>
    <property type="evidence" value="ECO:0007669"/>
    <property type="project" value="UniProtKB-KW"/>
</dbReference>
<dbReference type="GO" id="GO:0000287">
    <property type="term" value="F:magnesium ion binding"/>
    <property type="evidence" value="ECO:0007669"/>
    <property type="project" value="UniProtKB-UniRule"/>
</dbReference>
<dbReference type="GO" id="GO:0006310">
    <property type="term" value="P:DNA recombination"/>
    <property type="evidence" value="ECO:0007669"/>
    <property type="project" value="UniProtKB-UniRule"/>
</dbReference>
<dbReference type="GO" id="GO:0006281">
    <property type="term" value="P:DNA repair"/>
    <property type="evidence" value="ECO:0007669"/>
    <property type="project" value="UniProtKB-UniRule"/>
</dbReference>
<dbReference type="CDD" id="cd16962">
    <property type="entry name" value="RuvC"/>
    <property type="match status" value="1"/>
</dbReference>
<dbReference type="FunFam" id="3.30.420.10:FF:000002">
    <property type="entry name" value="Crossover junction endodeoxyribonuclease RuvC"/>
    <property type="match status" value="1"/>
</dbReference>
<dbReference type="Gene3D" id="3.30.420.10">
    <property type="entry name" value="Ribonuclease H-like superfamily/Ribonuclease H"/>
    <property type="match status" value="1"/>
</dbReference>
<dbReference type="HAMAP" id="MF_00034">
    <property type="entry name" value="RuvC"/>
    <property type="match status" value="1"/>
</dbReference>
<dbReference type="InterPro" id="IPR012337">
    <property type="entry name" value="RNaseH-like_sf"/>
</dbReference>
<dbReference type="InterPro" id="IPR036397">
    <property type="entry name" value="RNaseH_sf"/>
</dbReference>
<dbReference type="InterPro" id="IPR020563">
    <property type="entry name" value="X-over_junc_endoDNase_Mg_BS"/>
</dbReference>
<dbReference type="InterPro" id="IPR002176">
    <property type="entry name" value="X-over_junc_endoDNase_RuvC"/>
</dbReference>
<dbReference type="NCBIfam" id="TIGR00228">
    <property type="entry name" value="ruvC"/>
    <property type="match status" value="1"/>
</dbReference>
<dbReference type="PANTHER" id="PTHR30194">
    <property type="entry name" value="CROSSOVER JUNCTION ENDODEOXYRIBONUCLEASE RUVC"/>
    <property type="match status" value="1"/>
</dbReference>
<dbReference type="PANTHER" id="PTHR30194:SF3">
    <property type="entry name" value="CROSSOVER JUNCTION ENDODEOXYRIBONUCLEASE RUVC"/>
    <property type="match status" value="1"/>
</dbReference>
<dbReference type="Pfam" id="PF02075">
    <property type="entry name" value="RuvC"/>
    <property type="match status" value="1"/>
</dbReference>
<dbReference type="PRINTS" id="PR00696">
    <property type="entry name" value="RSOLVASERUVC"/>
</dbReference>
<dbReference type="SUPFAM" id="SSF53098">
    <property type="entry name" value="Ribonuclease H-like"/>
    <property type="match status" value="1"/>
</dbReference>
<dbReference type="PROSITE" id="PS01321">
    <property type="entry name" value="RUVC"/>
    <property type="match status" value="1"/>
</dbReference>
<name>RUVC_PSEP1</name>
<feature type="chain" id="PRO_1000002803" description="Crossover junction endodeoxyribonuclease RuvC">
    <location>
        <begin position="1"/>
        <end position="174"/>
    </location>
</feature>
<feature type="active site" evidence="1">
    <location>
        <position position="8"/>
    </location>
</feature>
<feature type="active site" evidence="1">
    <location>
        <position position="67"/>
    </location>
</feature>
<feature type="active site" evidence="1">
    <location>
        <position position="139"/>
    </location>
</feature>
<feature type="binding site" evidence="1">
    <location>
        <position position="8"/>
    </location>
    <ligand>
        <name>Mg(2+)</name>
        <dbReference type="ChEBI" id="CHEBI:18420"/>
        <label>1</label>
    </ligand>
</feature>
<feature type="binding site" evidence="1">
    <location>
        <position position="67"/>
    </location>
    <ligand>
        <name>Mg(2+)</name>
        <dbReference type="ChEBI" id="CHEBI:18420"/>
        <label>2</label>
    </ligand>
</feature>
<feature type="binding site" evidence="1">
    <location>
        <position position="139"/>
    </location>
    <ligand>
        <name>Mg(2+)</name>
        <dbReference type="ChEBI" id="CHEBI:18420"/>
        <label>1</label>
    </ligand>
</feature>